<proteinExistence type="evidence at protein level"/>
<accession>D4AUF4</accession>
<sequence length="720" mass="76986">MLINLSAVWAAFALSGVLAPPTWPASIDELEDLMFLNTGYHARGFSAGVTPCSFSQQGPSRVASAEWVRTAFHDMATGNSFTGVGGLDASIVFELGGKGGENIGAGFNTTLETYTPFFSTRSSMADLIALGVYTAVRSCGGPVVQVRTGRIDATARGPIGVPQPENSQGTFINQFTRMGFNVSDMIAVTACGHTMGGVHASNFPQIVVPGSAPNDFQLFDSTVSFDEKVAVDFVGGVAGNPLTSTTAKRSQRDADMKVFTADRNVTIKALADQVTFRSTCARVLQKMIEVVPSGVNLTAPIAPYEVKPGRLQLSLASNGSTIAFTGEIRVRTTSRPVTSISKVELVYKDRTGGSSCGSCIITTEYKGTAEGFDDSFAFYGFEARFPVETAISKFNVRVVLNTGETVVYNNNDEEDDNRLIISQKVRKNANTGSVKLSVTTKTPRSCCVTPALTTQSVPMSPQTTVGPYTLYAGNLTLAAAYRSNAKFDVSLTSGGAVISDSFKNTADLSSTCAPFGSNDPTMPDYTFDGCYTDTPESRALTSAAFVKENMTIAACSSLCKGYQFFGLEYGTECYCGDTRSNSSMQAPKSECNQPCGGDSSETCGAGYRIAIYKDDKWVPITSPQIPGYNYTGCYSDSPSNRTLSGSFTYNEKMTVELCASFCNGTKYFGVEYFSECYCGANMFPGSTIQPESDCGFFFSANKTQHCGGSNRINIYTKLDM</sequence>
<feature type="signal peptide" evidence="1">
    <location>
        <begin position="1"/>
        <end position="24"/>
    </location>
</feature>
<feature type="chain" id="PRO_5003053665" description="WSC domain-containing protein ARB_07870">
    <location>
        <begin position="25"/>
        <end position="720"/>
    </location>
</feature>
<feature type="domain" description="WSC 1" evidence="3">
    <location>
        <begin position="524"/>
        <end position="615"/>
    </location>
</feature>
<feature type="domain" description="WSC 2" evidence="3">
    <location>
        <begin position="627"/>
        <end position="718"/>
    </location>
</feature>
<feature type="glycosylation site" description="N-linked (GlcNAc...) asparagine" evidence="2">
    <location>
        <position position="4"/>
    </location>
</feature>
<feature type="glycosylation site" description="N-linked (GlcNAc...) asparagine" evidence="2">
    <location>
        <position position="108"/>
    </location>
</feature>
<feature type="glycosylation site" description="N-linked (GlcNAc...) asparagine" evidence="2">
    <location>
        <position position="181"/>
    </location>
</feature>
<feature type="glycosylation site" description="N-linked (GlcNAc...) asparagine" evidence="2">
    <location>
        <position position="264"/>
    </location>
</feature>
<feature type="glycosylation site" description="N-linked (GlcNAc...) asparagine" evidence="2">
    <location>
        <position position="296"/>
    </location>
</feature>
<feature type="glycosylation site" description="N-linked (GlcNAc...) asparagine" evidence="2">
    <location>
        <position position="318"/>
    </location>
</feature>
<feature type="glycosylation site" description="N-linked (GlcNAc...) asparagine" evidence="2">
    <location>
        <position position="474"/>
    </location>
</feature>
<feature type="glycosylation site" description="N-linked (GlcNAc...) asparagine" evidence="2">
    <location>
        <position position="549"/>
    </location>
</feature>
<feature type="glycosylation site" description="N-linked (GlcNAc...) asparagine" evidence="2">
    <location>
        <position position="581"/>
    </location>
</feature>
<feature type="glycosylation site" description="N-linked (GlcNAc...) asparagine" evidence="2">
    <location>
        <position position="629"/>
    </location>
</feature>
<feature type="glycosylation site" description="N-linked (GlcNAc...) asparagine" evidence="2">
    <location>
        <position position="640"/>
    </location>
</feature>
<feature type="glycosylation site" description="N-linked (GlcNAc...) asparagine" evidence="2">
    <location>
        <position position="663"/>
    </location>
</feature>
<feature type="glycosylation site" description="N-linked (GlcNAc...) asparagine" evidence="2">
    <location>
        <position position="701"/>
    </location>
</feature>
<dbReference type="EMBL" id="ABSU01000011">
    <property type="protein sequence ID" value="EFE33119.1"/>
    <property type="molecule type" value="Genomic_DNA"/>
</dbReference>
<dbReference type="RefSeq" id="XP_003013759.1">
    <property type="nucleotide sequence ID" value="XM_003013713.1"/>
</dbReference>
<dbReference type="STRING" id="663331.D4AUF4"/>
<dbReference type="GeneID" id="9526949"/>
<dbReference type="KEGG" id="abe:ARB_07870"/>
<dbReference type="eggNOG" id="KOG4157">
    <property type="taxonomic scope" value="Eukaryota"/>
</dbReference>
<dbReference type="HOGENOM" id="CLU_004824_1_0_1"/>
<dbReference type="OMA" id="HDMSTAN"/>
<dbReference type="Proteomes" id="UP000008866">
    <property type="component" value="Unassembled WGS sequence"/>
</dbReference>
<dbReference type="GO" id="GO:0005576">
    <property type="term" value="C:extracellular region"/>
    <property type="evidence" value="ECO:0007669"/>
    <property type="project" value="UniProtKB-SubCell"/>
</dbReference>
<dbReference type="GO" id="GO:0020037">
    <property type="term" value="F:heme binding"/>
    <property type="evidence" value="ECO:0007669"/>
    <property type="project" value="InterPro"/>
</dbReference>
<dbReference type="GO" id="GO:0004601">
    <property type="term" value="F:peroxidase activity"/>
    <property type="evidence" value="ECO:0007669"/>
    <property type="project" value="InterPro"/>
</dbReference>
<dbReference type="GO" id="GO:0006979">
    <property type="term" value="P:response to oxidative stress"/>
    <property type="evidence" value="ECO:0007669"/>
    <property type="project" value="InterPro"/>
</dbReference>
<dbReference type="Gene3D" id="1.10.520.10">
    <property type="match status" value="1"/>
</dbReference>
<dbReference type="Gene3D" id="1.10.420.10">
    <property type="entry name" value="Peroxidase, domain 2"/>
    <property type="match status" value="1"/>
</dbReference>
<dbReference type="InterPro" id="IPR002016">
    <property type="entry name" value="Haem_peroxidase"/>
</dbReference>
<dbReference type="InterPro" id="IPR010255">
    <property type="entry name" value="Haem_peroxidase_sf"/>
</dbReference>
<dbReference type="InterPro" id="IPR051589">
    <property type="entry name" value="Sialate-O-sulfotransferase"/>
</dbReference>
<dbReference type="InterPro" id="IPR002889">
    <property type="entry name" value="WSC_carb-bd"/>
</dbReference>
<dbReference type="PANTHER" id="PTHR45964">
    <property type="entry name" value="WSCD FAMILY MEMBER CG9164"/>
    <property type="match status" value="1"/>
</dbReference>
<dbReference type="PANTHER" id="PTHR45964:SF5">
    <property type="entry name" value="WSCD FAMILY MEMBER CG9164"/>
    <property type="match status" value="1"/>
</dbReference>
<dbReference type="Pfam" id="PF00141">
    <property type="entry name" value="peroxidase"/>
    <property type="match status" value="1"/>
</dbReference>
<dbReference type="Pfam" id="PF01822">
    <property type="entry name" value="WSC"/>
    <property type="match status" value="2"/>
</dbReference>
<dbReference type="PRINTS" id="PR00458">
    <property type="entry name" value="PEROXIDASE"/>
</dbReference>
<dbReference type="SMART" id="SM00321">
    <property type="entry name" value="WSC"/>
    <property type="match status" value="2"/>
</dbReference>
<dbReference type="SUPFAM" id="SSF48113">
    <property type="entry name" value="Heme-dependent peroxidases"/>
    <property type="match status" value="1"/>
</dbReference>
<dbReference type="PROSITE" id="PS50873">
    <property type="entry name" value="PEROXIDASE_4"/>
    <property type="match status" value="1"/>
</dbReference>
<dbReference type="PROSITE" id="PS51212">
    <property type="entry name" value="WSC"/>
    <property type="match status" value="2"/>
</dbReference>
<keyword id="KW-0325">Glycoprotein</keyword>
<keyword id="KW-1185">Reference proteome</keyword>
<keyword id="KW-0677">Repeat</keyword>
<keyword id="KW-0964">Secreted</keyword>
<keyword id="KW-0732">Signal</keyword>
<gene>
    <name type="ORF">ARB_07870</name>
</gene>
<comment type="subcellular location">
    <subcellularLocation>
        <location evidence="4 5">Secreted</location>
    </subcellularLocation>
</comment>
<comment type="similarity">
    <text evidence="6">Belongs to the WSCD family.</text>
</comment>
<reference key="1">
    <citation type="journal article" date="2011" name="Genome Biol.">
        <title>Comparative and functional genomics provide insights into the pathogenicity of dermatophytic fungi.</title>
        <authorList>
            <person name="Burmester A."/>
            <person name="Shelest E."/>
            <person name="Gloeckner G."/>
            <person name="Heddergott C."/>
            <person name="Schindler S."/>
            <person name="Staib P."/>
            <person name="Heidel A."/>
            <person name="Felder M."/>
            <person name="Petzold A."/>
            <person name="Szafranski K."/>
            <person name="Feuermann M."/>
            <person name="Pedruzzi I."/>
            <person name="Priebe S."/>
            <person name="Groth M."/>
            <person name="Winkler R."/>
            <person name="Li W."/>
            <person name="Kniemeyer O."/>
            <person name="Schroeckh V."/>
            <person name="Hertweck C."/>
            <person name="Hube B."/>
            <person name="White T.C."/>
            <person name="Platzer M."/>
            <person name="Guthke R."/>
            <person name="Heitman J."/>
            <person name="Woestemeyer J."/>
            <person name="Zipfel P.F."/>
            <person name="Monod M."/>
            <person name="Brakhage A.A."/>
        </authorList>
    </citation>
    <scope>NUCLEOTIDE SEQUENCE [LARGE SCALE GENOMIC DNA]</scope>
    <scope>IDENTIFICATION BY MASS SPECTROMETRY</scope>
    <scope>SUBCELLULAR LOCATION</scope>
    <source>
        <strain>ATCC MYA-4681 / CBS 112371</strain>
    </source>
</reference>
<reference key="2">
    <citation type="journal article" date="2011" name="Proteomics">
        <title>Identification of novel secreted proteases during extracellular proteolysis by dermatophytes at acidic pH.</title>
        <authorList>
            <person name="Sriranganadane D."/>
            <person name="Waridel P."/>
            <person name="Salamin K."/>
            <person name="Feuermann M."/>
            <person name="Mignon B."/>
            <person name="Staib P."/>
            <person name="Neuhaus J.M."/>
            <person name="Quadroni M."/>
            <person name="Monod M."/>
        </authorList>
    </citation>
    <scope>IDENTIFICATION BY MASS SPECTROMETRY</scope>
    <scope>SUBCELLULAR LOCATION</scope>
</reference>
<evidence type="ECO:0000255" key="1"/>
<evidence type="ECO:0000255" key="2">
    <source>
        <dbReference type="PROSITE-ProRule" id="PRU00498"/>
    </source>
</evidence>
<evidence type="ECO:0000255" key="3">
    <source>
        <dbReference type="PROSITE-ProRule" id="PRU00558"/>
    </source>
</evidence>
<evidence type="ECO:0000269" key="4">
    <source>
    </source>
</evidence>
<evidence type="ECO:0000269" key="5">
    <source>
    </source>
</evidence>
<evidence type="ECO:0000305" key="6"/>
<organism>
    <name type="scientific">Arthroderma benhamiae (strain ATCC MYA-4681 / CBS 112371)</name>
    <name type="common">Trichophyton mentagrophytes</name>
    <dbReference type="NCBI Taxonomy" id="663331"/>
    <lineage>
        <taxon>Eukaryota</taxon>
        <taxon>Fungi</taxon>
        <taxon>Dikarya</taxon>
        <taxon>Ascomycota</taxon>
        <taxon>Pezizomycotina</taxon>
        <taxon>Eurotiomycetes</taxon>
        <taxon>Eurotiomycetidae</taxon>
        <taxon>Onygenales</taxon>
        <taxon>Arthrodermataceae</taxon>
        <taxon>Trichophyton</taxon>
    </lineage>
</organism>
<protein>
    <recommendedName>
        <fullName evidence="6">WSC domain-containing protein ARB_07870</fullName>
    </recommendedName>
</protein>
<name>WSCD2_ARTBC</name>